<keyword id="KW-1185">Reference proteome</keyword>
<keyword id="KW-0687">Ribonucleoprotein</keyword>
<keyword id="KW-0689">Ribosomal protein</keyword>
<name>RL33_CORK4</name>
<organism>
    <name type="scientific">Corynebacterium kroppenstedtii (strain DSM 44385 / JCM 11950 / CIP 105744 / CCUG 35717)</name>
    <dbReference type="NCBI Taxonomy" id="645127"/>
    <lineage>
        <taxon>Bacteria</taxon>
        <taxon>Bacillati</taxon>
        <taxon>Actinomycetota</taxon>
        <taxon>Actinomycetes</taxon>
        <taxon>Mycobacteriales</taxon>
        <taxon>Corynebacteriaceae</taxon>
        <taxon>Corynebacterium</taxon>
    </lineage>
</organism>
<gene>
    <name evidence="1" type="primary">rpmG</name>
    <name type="ordered locus">ckrop_0481</name>
</gene>
<evidence type="ECO:0000255" key="1">
    <source>
        <dbReference type="HAMAP-Rule" id="MF_00294"/>
    </source>
</evidence>
<evidence type="ECO:0000305" key="2"/>
<accession>C4LHF2</accession>
<sequence>MARNDIRPIIKLKSTAGTGYTYVTRKNKRNNPDRITLKKFDPIARKHVEFREER</sequence>
<protein>
    <recommendedName>
        <fullName evidence="1">Large ribosomal subunit protein bL33</fullName>
    </recommendedName>
    <alternativeName>
        <fullName evidence="2">50S ribosomal protein L33</fullName>
    </alternativeName>
</protein>
<feature type="chain" id="PRO_1000204905" description="Large ribosomal subunit protein bL33">
    <location>
        <begin position="1"/>
        <end position="54"/>
    </location>
</feature>
<comment type="similarity">
    <text evidence="1">Belongs to the bacterial ribosomal protein bL33 family.</text>
</comment>
<proteinExistence type="inferred from homology"/>
<dbReference type="EMBL" id="CP001620">
    <property type="protein sequence ID" value="ACR17257.1"/>
    <property type="molecule type" value="Genomic_DNA"/>
</dbReference>
<dbReference type="RefSeq" id="WP_005279910.1">
    <property type="nucleotide sequence ID" value="NC_012704.1"/>
</dbReference>
<dbReference type="SMR" id="C4LHF2"/>
<dbReference type="STRING" id="645127.ckrop_0481"/>
<dbReference type="GeneID" id="92746601"/>
<dbReference type="KEGG" id="ckp:ckrop_0481"/>
<dbReference type="eggNOG" id="COG0267">
    <property type="taxonomic scope" value="Bacteria"/>
</dbReference>
<dbReference type="HOGENOM" id="CLU_190949_1_1_11"/>
<dbReference type="OrthoDB" id="21586at2"/>
<dbReference type="Proteomes" id="UP000001473">
    <property type="component" value="Chromosome"/>
</dbReference>
<dbReference type="GO" id="GO:0022625">
    <property type="term" value="C:cytosolic large ribosomal subunit"/>
    <property type="evidence" value="ECO:0007669"/>
    <property type="project" value="TreeGrafter"/>
</dbReference>
<dbReference type="GO" id="GO:0003735">
    <property type="term" value="F:structural constituent of ribosome"/>
    <property type="evidence" value="ECO:0007669"/>
    <property type="project" value="InterPro"/>
</dbReference>
<dbReference type="GO" id="GO:0006412">
    <property type="term" value="P:translation"/>
    <property type="evidence" value="ECO:0007669"/>
    <property type="project" value="UniProtKB-UniRule"/>
</dbReference>
<dbReference type="FunFam" id="2.20.28.120:FF:000002">
    <property type="entry name" value="50S ribosomal protein L33"/>
    <property type="match status" value="1"/>
</dbReference>
<dbReference type="Gene3D" id="2.20.28.120">
    <property type="entry name" value="Ribosomal protein L33"/>
    <property type="match status" value="1"/>
</dbReference>
<dbReference type="HAMAP" id="MF_00294">
    <property type="entry name" value="Ribosomal_bL33"/>
    <property type="match status" value="1"/>
</dbReference>
<dbReference type="InterPro" id="IPR001705">
    <property type="entry name" value="Ribosomal_bL33"/>
</dbReference>
<dbReference type="InterPro" id="IPR018264">
    <property type="entry name" value="Ribosomal_bL33_CS"/>
</dbReference>
<dbReference type="InterPro" id="IPR038584">
    <property type="entry name" value="Ribosomal_bL33_sf"/>
</dbReference>
<dbReference type="InterPro" id="IPR011332">
    <property type="entry name" value="Ribosomal_zn-bd"/>
</dbReference>
<dbReference type="NCBIfam" id="NF001860">
    <property type="entry name" value="PRK00595.1"/>
    <property type="match status" value="1"/>
</dbReference>
<dbReference type="NCBIfam" id="TIGR01023">
    <property type="entry name" value="rpmG_bact"/>
    <property type="match status" value="1"/>
</dbReference>
<dbReference type="PANTHER" id="PTHR15238">
    <property type="entry name" value="54S RIBOSOMAL PROTEIN L39, MITOCHONDRIAL"/>
    <property type="match status" value="1"/>
</dbReference>
<dbReference type="PANTHER" id="PTHR15238:SF1">
    <property type="entry name" value="LARGE RIBOSOMAL SUBUNIT PROTEIN BL33M"/>
    <property type="match status" value="1"/>
</dbReference>
<dbReference type="Pfam" id="PF00471">
    <property type="entry name" value="Ribosomal_L33"/>
    <property type="match status" value="1"/>
</dbReference>
<dbReference type="SUPFAM" id="SSF57829">
    <property type="entry name" value="Zn-binding ribosomal proteins"/>
    <property type="match status" value="1"/>
</dbReference>
<dbReference type="PROSITE" id="PS00582">
    <property type="entry name" value="RIBOSOMAL_L33"/>
    <property type="match status" value="1"/>
</dbReference>
<reference key="1">
    <citation type="journal article" date="2008" name="J. Biotechnol.">
        <title>Ultrafast pyrosequencing of Corynebacterium kroppenstedtii DSM44385 revealed insights into the physiology of a lipophilic corynebacterium that lacks mycolic acids.</title>
        <authorList>
            <person name="Tauch A."/>
            <person name="Schneider J."/>
            <person name="Szczepanowski R."/>
            <person name="Tilker A."/>
            <person name="Viehoever P."/>
            <person name="Gartemann K.-H."/>
            <person name="Arnold W."/>
            <person name="Blom J."/>
            <person name="Brinkrolf K."/>
            <person name="Brune I."/>
            <person name="Goetker S."/>
            <person name="Weisshaar B."/>
            <person name="Goesmann A."/>
            <person name="Droege M."/>
            <person name="Puehler A."/>
        </authorList>
    </citation>
    <scope>NUCLEOTIDE SEQUENCE [LARGE SCALE GENOMIC DNA]</scope>
    <source>
        <strain>DSM 44385 / JCM 11950 / CIP 105744 / CCUG 35717</strain>
    </source>
</reference>